<proteinExistence type="inferred from homology"/>
<gene>
    <name evidence="1" type="primary">rpmA</name>
    <name type="ordered locus">sce7921</name>
</gene>
<sequence length="85" mass="9027">MAHKKGGGSSRNGRDSNAQRRGVKVYAGAPVRAGNILVRQVGSSIHAGHNVGTGRDFTLFALVDGVVTYEWKSNTKKQVSVYPAS</sequence>
<name>RL27_SORC5</name>
<feature type="chain" id="PRO_1000081914" description="Large ribosomal subunit protein bL27">
    <location>
        <begin position="1"/>
        <end position="85"/>
    </location>
</feature>
<feature type="region of interest" description="Disordered" evidence="2">
    <location>
        <begin position="1"/>
        <end position="22"/>
    </location>
</feature>
<evidence type="ECO:0000255" key="1">
    <source>
        <dbReference type="HAMAP-Rule" id="MF_00539"/>
    </source>
</evidence>
<evidence type="ECO:0000256" key="2">
    <source>
        <dbReference type="SAM" id="MobiDB-lite"/>
    </source>
</evidence>
<evidence type="ECO:0000305" key="3"/>
<organism>
    <name type="scientific">Sorangium cellulosum (strain So ce56)</name>
    <name type="common">Polyangium cellulosum (strain So ce56)</name>
    <dbReference type="NCBI Taxonomy" id="448385"/>
    <lineage>
        <taxon>Bacteria</taxon>
        <taxon>Pseudomonadati</taxon>
        <taxon>Myxococcota</taxon>
        <taxon>Polyangia</taxon>
        <taxon>Polyangiales</taxon>
        <taxon>Polyangiaceae</taxon>
        <taxon>Sorangium</taxon>
    </lineage>
</organism>
<accession>A9FG63</accession>
<dbReference type="EMBL" id="AM746676">
    <property type="protein sequence ID" value="CAN98091.1"/>
    <property type="molecule type" value="Genomic_DNA"/>
</dbReference>
<dbReference type="RefSeq" id="WP_012240530.1">
    <property type="nucleotide sequence ID" value="NC_010162.1"/>
</dbReference>
<dbReference type="SMR" id="A9FG63"/>
<dbReference type="STRING" id="448385.sce7921"/>
<dbReference type="KEGG" id="scl:sce7921"/>
<dbReference type="eggNOG" id="COG0211">
    <property type="taxonomic scope" value="Bacteria"/>
</dbReference>
<dbReference type="HOGENOM" id="CLU_095424_4_0_7"/>
<dbReference type="OrthoDB" id="9803474at2"/>
<dbReference type="BioCyc" id="SCEL448385:SCE_RS40550-MONOMER"/>
<dbReference type="Proteomes" id="UP000002139">
    <property type="component" value="Chromosome"/>
</dbReference>
<dbReference type="GO" id="GO:1990904">
    <property type="term" value="C:ribonucleoprotein complex"/>
    <property type="evidence" value="ECO:0007669"/>
    <property type="project" value="UniProtKB-KW"/>
</dbReference>
<dbReference type="GO" id="GO:0005840">
    <property type="term" value="C:ribosome"/>
    <property type="evidence" value="ECO:0007669"/>
    <property type="project" value="UniProtKB-KW"/>
</dbReference>
<dbReference type="GO" id="GO:0003735">
    <property type="term" value="F:structural constituent of ribosome"/>
    <property type="evidence" value="ECO:0007669"/>
    <property type="project" value="InterPro"/>
</dbReference>
<dbReference type="GO" id="GO:0006412">
    <property type="term" value="P:translation"/>
    <property type="evidence" value="ECO:0007669"/>
    <property type="project" value="UniProtKB-UniRule"/>
</dbReference>
<dbReference type="FunFam" id="2.40.50.100:FF:000060">
    <property type="entry name" value="Apicoplast ribosomal protein L27"/>
    <property type="match status" value="1"/>
</dbReference>
<dbReference type="Gene3D" id="2.40.50.100">
    <property type="match status" value="1"/>
</dbReference>
<dbReference type="HAMAP" id="MF_00539">
    <property type="entry name" value="Ribosomal_bL27"/>
    <property type="match status" value="1"/>
</dbReference>
<dbReference type="InterPro" id="IPR001684">
    <property type="entry name" value="Ribosomal_bL27"/>
</dbReference>
<dbReference type="NCBIfam" id="TIGR00062">
    <property type="entry name" value="L27"/>
    <property type="match status" value="1"/>
</dbReference>
<dbReference type="PANTHER" id="PTHR15893:SF0">
    <property type="entry name" value="LARGE RIBOSOMAL SUBUNIT PROTEIN BL27M"/>
    <property type="match status" value="1"/>
</dbReference>
<dbReference type="PANTHER" id="PTHR15893">
    <property type="entry name" value="RIBOSOMAL PROTEIN L27"/>
    <property type="match status" value="1"/>
</dbReference>
<dbReference type="Pfam" id="PF01016">
    <property type="entry name" value="Ribosomal_L27"/>
    <property type="match status" value="1"/>
</dbReference>
<dbReference type="PRINTS" id="PR00063">
    <property type="entry name" value="RIBOSOMALL27"/>
</dbReference>
<dbReference type="SUPFAM" id="SSF110324">
    <property type="entry name" value="Ribosomal L27 protein-like"/>
    <property type="match status" value="1"/>
</dbReference>
<keyword id="KW-1185">Reference proteome</keyword>
<keyword id="KW-0687">Ribonucleoprotein</keyword>
<keyword id="KW-0689">Ribosomal protein</keyword>
<reference key="1">
    <citation type="journal article" date="2007" name="Nat. Biotechnol.">
        <title>Complete genome sequence of the myxobacterium Sorangium cellulosum.</title>
        <authorList>
            <person name="Schneiker S."/>
            <person name="Perlova O."/>
            <person name="Kaiser O."/>
            <person name="Gerth K."/>
            <person name="Alici A."/>
            <person name="Altmeyer M.O."/>
            <person name="Bartels D."/>
            <person name="Bekel T."/>
            <person name="Beyer S."/>
            <person name="Bode E."/>
            <person name="Bode H.B."/>
            <person name="Bolten C.J."/>
            <person name="Choudhuri J.V."/>
            <person name="Doss S."/>
            <person name="Elnakady Y.A."/>
            <person name="Frank B."/>
            <person name="Gaigalat L."/>
            <person name="Goesmann A."/>
            <person name="Groeger C."/>
            <person name="Gross F."/>
            <person name="Jelsbak L."/>
            <person name="Jelsbak L."/>
            <person name="Kalinowski J."/>
            <person name="Kegler C."/>
            <person name="Knauber T."/>
            <person name="Konietzny S."/>
            <person name="Kopp M."/>
            <person name="Krause L."/>
            <person name="Krug D."/>
            <person name="Linke B."/>
            <person name="Mahmud T."/>
            <person name="Martinez-Arias R."/>
            <person name="McHardy A.C."/>
            <person name="Merai M."/>
            <person name="Meyer F."/>
            <person name="Mormann S."/>
            <person name="Munoz-Dorado J."/>
            <person name="Perez J."/>
            <person name="Pradella S."/>
            <person name="Rachid S."/>
            <person name="Raddatz G."/>
            <person name="Rosenau F."/>
            <person name="Rueckert C."/>
            <person name="Sasse F."/>
            <person name="Scharfe M."/>
            <person name="Schuster S.C."/>
            <person name="Suen G."/>
            <person name="Treuner-Lange A."/>
            <person name="Velicer G.J."/>
            <person name="Vorholter F.-J."/>
            <person name="Weissman K.J."/>
            <person name="Welch R.D."/>
            <person name="Wenzel S.C."/>
            <person name="Whitworth D.E."/>
            <person name="Wilhelm S."/>
            <person name="Wittmann C."/>
            <person name="Bloecker H."/>
            <person name="Puehler A."/>
            <person name="Mueller R."/>
        </authorList>
    </citation>
    <scope>NUCLEOTIDE SEQUENCE [LARGE SCALE GENOMIC DNA]</scope>
    <source>
        <strain>So ce56</strain>
    </source>
</reference>
<comment type="similarity">
    <text evidence="1">Belongs to the bacterial ribosomal protein bL27 family.</text>
</comment>
<protein>
    <recommendedName>
        <fullName evidence="1">Large ribosomal subunit protein bL27</fullName>
    </recommendedName>
    <alternativeName>
        <fullName evidence="3">50S ribosomal protein L27</fullName>
    </alternativeName>
</protein>